<accession>B6EIY7</accession>
<evidence type="ECO:0000255" key="1">
    <source>
        <dbReference type="HAMAP-Rule" id="MF_00551"/>
    </source>
</evidence>
<keyword id="KW-0067">ATP-binding</keyword>
<keyword id="KW-0963">Cytoplasm</keyword>
<keyword id="KW-0418">Kinase</keyword>
<keyword id="KW-0547">Nucleotide-binding</keyword>
<keyword id="KW-0808">Transferase</keyword>
<proteinExistence type="inferred from homology"/>
<reference key="1">
    <citation type="journal article" date="2008" name="BMC Genomics">
        <title>The genome sequence of the fish pathogen Aliivibrio salmonicida strain LFI1238 shows extensive evidence of gene decay.</title>
        <authorList>
            <person name="Hjerde E."/>
            <person name="Lorentzen M.S."/>
            <person name="Holden M.T."/>
            <person name="Seeger K."/>
            <person name="Paulsen S."/>
            <person name="Bason N."/>
            <person name="Churcher C."/>
            <person name="Harris D."/>
            <person name="Norbertczak H."/>
            <person name="Quail M.A."/>
            <person name="Sanders S."/>
            <person name="Thurston S."/>
            <person name="Parkhill J."/>
            <person name="Willassen N.P."/>
            <person name="Thomson N.R."/>
        </authorList>
    </citation>
    <scope>NUCLEOTIDE SEQUENCE [LARGE SCALE GENOMIC DNA]</scope>
    <source>
        <strain>LFI1238</strain>
    </source>
</reference>
<sequence>MSENSNHHCIIVGIAGASASGKSLIASTIYNELRAKVGDHQIGVITEDSYYKDQSHLTMEERVKTNYDHPNALDHRLLSEHLEQLMRGEAVNIPTYSYTEHTRTSDVEVMTPKKVIILEGILLLTDPRLRNLMHASVFMDTPLDICLLRRAKRDVEERGRSMESVFEQYQKTVRPMFMQFIDPSKQHADIIVPRGGKNRIAIDVLKAHISRLLKA</sequence>
<protein>
    <recommendedName>
        <fullName evidence="1">Uridine kinase</fullName>
        <ecNumber evidence="1">2.7.1.48</ecNumber>
    </recommendedName>
    <alternativeName>
        <fullName evidence="1">Cytidine monophosphokinase</fullName>
    </alternativeName>
    <alternativeName>
        <fullName evidence="1">Uridine monophosphokinase</fullName>
    </alternativeName>
</protein>
<organism>
    <name type="scientific">Aliivibrio salmonicida (strain LFI1238)</name>
    <name type="common">Vibrio salmonicida (strain LFI1238)</name>
    <dbReference type="NCBI Taxonomy" id="316275"/>
    <lineage>
        <taxon>Bacteria</taxon>
        <taxon>Pseudomonadati</taxon>
        <taxon>Pseudomonadota</taxon>
        <taxon>Gammaproteobacteria</taxon>
        <taxon>Vibrionales</taxon>
        <taxon>Vibrionaceae</taxon>
        <taxon>Aliivibrio</taxon>
    </lineage>
</organism>
<gene>
    <name evidence="1" type="primary">udk</name>
    <name type="ordered locus">VSAL_I2228</name>
</gene>
<comment type="catalytic activity">
    <reaction evidence="1">
        <text>uridine + ATP = UMP + ADP + H(+)</text>
        <dbReference type="Rhea" id="RHEA:16825"/>
        <dbReference type="ChEBI" id="CHEBI:15378"/>
        <dbReference type="ChEBI" id="CHEBI:16704"/>
        <dbReference type="ChEBI" id="CHEBI:30616"/>
        <dbReference type="ChEBI" id="CHEBI:57865"/>
        <dbReference type="ChEBI" id="CHEBI:456216"/>
        <dbReference type="EC" id="2.7.1.48"/>
    </reaction>
</comment>
<comment type="catalytic activity">
    <reaction evidence="1">
        <text>cytidine + ATP = CMP + ADP + H(+)</text>
        <dbReference type="Rhea" id="RHEA:24674"/>
        <dbReference type="ChEBI" id="CHEBI:15378"/>
        <dbReference type="ChEBI" id="CHEBI:17562"/>
        <dbReference type="ChEBI" id="CHEBI:30616"/>
        <dbReference type="ChEBI" id="CHEBI:60377"/>
        <dbReference type="ChEBI" id="CHEBI:456216"/>
        <dbReference type="EC" id="2.7.1.48"/>
    </reaction>
</comment>
<comment type="pathway">
    <text evidence="1">Pyrimidine metabolism; CTP biosynthesis via salvage pathway; CTP from cytidine: step 1/3.</text>
</comment>
<comment type="pathway">
    <text evidence="1">Pyrimidine metabolism; UMP biosynthesis via salvage pathway; UMP from uridine: step 1/1.</text>
</comment>
<comment type="subcellular location">
    <subcellularLocation>
        <location evidence="1">Cytoplasm</location>
    </subcellularLocation>
</comment>
<comment type="similarity">
    <text evidence="1">Belongs to the uridine kinase family.</text>
</comment>
<feature type="chain" id="PRO_1000129062" description="Uridine kinase">
    <location>
        <begin position="1"/>
        <end position="215"/>
    </location>
</feature>
<feature type="binding site" evidence="1">
    <location>
        <begin position="16"/>
        <end position="23"/>
    </location>
    <ligand>
        <name>ATP</name>
        <dbReference type="ChEBI" id="CHEBI:30616"/>
    </ligand>
</feature>
<name>URK_ALISL</name>
<dbReference type="EC" id="2.7.1.48" evidence="1"/>
<dbReference type="EMBL" id="FM178379">
    <property type="protein sequence ID" value="CAQ79912.1"/>
    <property type="molecule type" value="Genomic_DNA"/>
</dbReference>
<dbReference type="RefSeq" id="WP_012550742.1">
    <property type="nucleotide sequence ID" value="NC_011312.1"/>
</dbReference>
<dbReference type="SMR" id="B6EIY7"/>
<dbReference type="KEGG" id="vsa:VSAL_I2228"/>
<dbReference type="eggNOG" id="COG0572">
    <property type="taxonomic scope" value="Bacteria"/>
</dbReference>
<dbReference type="HOGENOM" id="CLU_021278_1_2_6"/>
<dbReference type="UniPathway" id="UPA00574">
    <property type="reaction ID" value="UER00637"/>
</dbReference>
<dbReference type="UniPathway" id="UPA00579">
    <property type="reaction ID" value="UER00640"/>
</dbReference>
<dbReference type="Proteomes" id="UP000001730">
    <property type="component" value="Chromosome 1"/>
</dbReference>
<dbReference type="GO" id="GO:0005737">
    <property type="term" value="C:cytoplasm"/>
    <property type="evidence" value="ECO:0007669"/>
    <property type="project" value="UniProtKB-SubCell"/>
</dbReference>
<dbReference type="GO" id="GO:0005524">
    <property type="term" value="F:ATP binding"/>
    <property type="evidence" value="ECO:0007669"/>
    <property type="project" value="UniProtKB-UniRule"/>
</dbReference>
<dbReference type="GO" id="GO:0043771">
    <property type="term" value="F:cytidine kinase activity"/>
    <property type="evidence" value="ECO:0007669"/>
    <property type="project" value="RHEA"/>
</dbReference>
<dbReference type="GO" id="GO:0004849">
    <property type="term" value="F:uridine kinase activity"/>
    <property type="evidence" value="ECO:0007669"/>
    <property type="project" value="UniProtKB-UniRule"/>
</dbReference>
<dbReference type="GO" id="GO:0044211">
    <property type="term" value="P:CTP salvage"/>
    <property type="evidence" value="ECO:0007669"/>
    <property type="project" value="UniProtKB-UniRule"/>
</dbReference>
<dbReference type="GO" id="GO:0044206">
    <property type="term" value="P:UMP salvage"/>
    <property type="evidence" value="ECO:0007669"/>
    <property type="project" value="UniProtKB-UniRule"/>
</dbReference>
<dbReference type="CDD" id="cd02023">
    <property type="entry name" value="UMPK"/>
    <property type="match status" value="1"/>
</dbReference>
<dbReference type="Gene3D" id="3.40.50.300">
    <property type="entry name" value="P-loop containing nucleotide triphosphate hydrolases"/>
    <property type="match status" value="1"/>
</dbReference>
<dbReference type="HAMAP" id="MF_00551">
    <property type="entry name" value="Uridine_kinase"/>
    <property type="match status" value="1"/>
</dbReference>
<dbReference type="InterPro" id="IPR027417">
    <property type="entry name" value="P-loop_NTPase"/>
</dbReference>
<dbReference type="InterPro" id="IPR006083">
    <property type="entry name" value="PRK/URK"/>
</dbReference>
<dbReference type="InterPro" id="IPR026008">
    <property type="entry name" value="Uridine_kinase"/>
</dbReference>
<dbReference type="InterPro" id="IPR000764">
    <property type="entry name" value="Uridine_kinase-like"/>
</dbReference>
<dbReference type="NCBIfam" id="NF004018">
    <property type="entry name" value="PRK05480.1"/>
    <property type="match status" value="1"/>
</dbReference>
<dbReference type="NCBIfam" id="TIGR00235">
    <property type="entry name" value="udk"/>
    <property type="match status" value="1"/>
</dbReference>
<dbReference type="PANTHER" id="PTHR10285">
    <property type="entry name" value="URIDINE KINASE"/>
    <property type="match status" value="1"/>
</dbReference>
<dbReference type="Pfam" id="PF00485">
    <property type="entry name" value="PRK"/>
    <property type="match status" value="1"/>
</dbReference>
<dbReference type="PRINTS" id="PR00988">
    <property type="entry name" value="URIDINKINASE"/>
</dbReference>
<dbReference type="SUPFAM" id="SSF52540">
    <property type="entry name" value="P-loop containing nucleoside triphosphate hydrolases"/>
    <property type="match status" value="1"/>
</dbReference>